<evidence type="ECO:0000250" key="1">
    <source>
        <dbReference type="UniProtKB" id="P04798"/>
    </source>
</evidence>
<evidence type="ECO:0000255" key="2"/>
<evidence type="ECO:0000269" key="3">
    <source>
    </source>
</evidence>
<evidence type="ECO:0000269" key="4">
    <source>
    </source>
</evidence>
<evidence type="ECO:0000303" key="5">
    <source>
    </source>
</evidence>
<evidence type="ECO:0000305" key="6"/>
<sequence length="538" mass="61246">MGASTFSQSFAEGYAAWALMLPALVGCALLIYRAFFAIRYPANLPLAGEPDGKRTFSWRTRWRYYIDCEALYKETYDNYTKHGKTVLLPGLGFRHDIVLPQSAMRDIMARPEKELSHADAVLELVQLKYSLGHEKYKADPWPCMLVKSDINSKLEAVCDGMNEELKYAFDKYVGCDTESWKEVDLLETIRMIIMAAASRFTVGFPLCRSEAYLRACWKVNDGIMMNGGLTGATPRLLRPIVGPLVTMKLRQSIEQVKKHVEPIYRQRVQALSQQNSAEKPASDETQDLFQQMLRYAQRERPGELHDLPSMCRRLCFANFAAVHQTTLLVTNMVLNIVSSDPQHNTISVLRDEVKDVIGPDSNAKWTKYKVAQMIKSDSVARETMRLYSNTNRGVFRKVLVEGIKTEDGIELPKGAYVSFLGRPLQCDPETFEDPFEYNPFRFSRIREQAPRDTKGRSSASHLSFVSTSPEHLPFGHGGHSCPGRFLVDFEVKMIVAYLLMNYDVEFPAEYKGQRPANRWMAEALMPPSGARIRIKRRS</sequence>
<feature type="chain" id="PRO_0000462099" description="Cytochrome P450 monooxygenase astC">
    <location>
        <begin position="1"/>
        <end position="538"/>
    </location>
</feature>
<feature type="transmembrane region" description="Helical" evidence="2">
    <location>
        <begin position="18"/>
        <end position="38"/>
    </location>
</feature>
<feature type="binding site" description="axial binding residue" evidence="1">
    <location>
        <position position="481"/>
    </location>
    <ligand>
        <name>heme</name>
        <dbReference type="ChEBI" id="CHEBI:30413"/>
    </ligand>
    <ligandPart>
        <name>Fe</name>
        <dbReference type="ChEBI" id="CHEBI:18248"/>
    </ligandPart>
</feature>
<accession>Q0CPG6</accession>
<proteinExistence type="evidence at protein level"/>
<organism>
    <name type="scientific">Aspergillus terreus (strain NIH 2624 / FGSC A1156)</name>
    <dbReference type="NCBI Taxonomy" id="341663"/>
    <lineage>
        <taxon>Eukaryota</taxon>
        <taxon>Fungi</taxon>
        <taxon>Dikarya</taxon>
        <taxon>Ascomycota</taxon>
        <taxon>Pezizomycotina</taxon>
        <taxon>Eurotiomycetes</taxon>
        <taxon>Eurotiomycetidae</taxon>
        <taxon>Eurotiales</taxon>
        <taxon>Aspergillaceae</taxon>
        <taxon>Aspergillus</taxon>
        <taxon>Aspergillus subgen. Circumdati</taxon>
    </lineage>
</organism>
<gene>
    <name evidence="5" type="primary">astC</name>
    <name type="ORF">ATEG_04418</name>
</gene>
<protein>
    <recommendedName>
        <fullName evidence="5">Cytochrome P450 monooxygenase astC</fullName>
        <ecNumber evidence="3">1.-.-.-</ecNumber>
    </recommendedName>
    <alternativeName>
        <fullName evidence="5">Aspterric acid biosynthesis cluster protein C</fullName>
    </alternativeName>
</protein>
<comment type="function">
    <text evidence="3 4">Cytochrome P450 monooxygenase; part of the gene cluster that mediates the biosynthesis of the sesquiterpenoid aspterric acid (AA), an inhibitor of dihydroxy-acid dehydratase (DHAD) effective as an herbicide (PubMed:29995859, PubMed:39511739). AstC catalyzes the third and last step within the pathway and converts the alpha-epoxy carboxylate intermediate produced by the cytochrome P450 monooxygenase astC from (-)daucane into the tricyclic aspterric acid (PubMed:29995859).</text>
</comment>
<comment type="cofactor">
    <cofactor evidence="1">
        <name>heme</name>
        <dbReference type="ChEBI" id="CHEBI:30413"/>
    </cofactor>
</comment>
<comment type="pathway">
    <text evidence="3 4">Secondary metabolite biosynthesis; terpenoid biosynthesis.</text>
</comment>
<comment type="subcellular location">
    <subcellularLocation>
        <location evidence="2">Membrane</location>
        <topology evidence="2">Single-pass membrane protein</topology>
    </subcellularLocation>
</comment>
<comment type="biotechnology">
    <text evidence="3 4">The fungal sesquiterpenoid aspterric acid (AA) is a submicromolar inhibitor of dihydroxy-acid dehydratase (DHAD) in plants and is effective as an herbicide in spray applications.</text>
</comment>
<comment type="similarity">
    <text evidence="6">Belongs to the cytochrome P450 family.</text>
</comment>
<keyword id="KW-0349">Heme</keyword>
<keyword id="KW-0408">Iron</keyword>
<keyword id="KW-0472">Membrane</keyword>
<keyword id="KW-0479">Metal-binding</keyword>
<keyword id="KW-0503">Monooxygenase</keyword>
<keyword id="KW-0560">Oxidoreductase</keyword>
<keyword id="KW-1185">Reference proteome</keyword>
<keyword id="KW-0812">Transmembrane</keyword>
<keyword id="KW-1133">Transmembrane helix</keyword>
<name>ASTC_ASPTN</name>
<reference key="1">
    <citation type="submission" date="2005-09" db="EMBL/GenBank/DDBJ databases">
        <title>Annotation of the Aspergillus terreus NIH2624 genome.</title>
        <authorList>
            <person name="Birren B.W."/>
            <person name="Lander E.S."/>
            <person name="Galagan J.E."/>
            <person name="Nusbaum C."/>
            <person name="Devon K."/>
            <person name="Henn M."/>
            <person name="Ma L.-J."/>
            <person name="Jaffe D.B."/>
            <person name="Butler J."/>
            <person name="Alvarez P."/>
            <person name="Gnerre S."/>
            <person name="Grabherr M."/>
            <person name="Kleber M."/>
            <person name="Mauceli E.W."/>
            <person name="Brockman W."/>
            <person name="Rounsley S."/>
            <person name="Young S.K."/>
            <person name="LaButti K."/>
            <person name="Pushparaj V."/>
            <person name="DeCaprio D."/>
            <person name="Crawford M."/>
            <person name="Koehrsen M."/>
            <person name="Engels R."/>
            <person name="Montgomery P."/>
            <person name="Pearson M."/>
            <person name="Howarth C."/>
            <person name="Larson L."/>
            <person name="Luoma S."/>
            <person name="White J."/>
            <person name="Alvarado L."/>
            <person name="Kodira C.D."/>
            <person name="Zeng Q."/>
            <person name="Oleary S."/>
            <person name="Yandava C."/>
            <person name="Denning D.W."/>
            <person name="Nierman W.C."/>
            <person name="Milne T."/>
            <person name="Madden K."/>
        </authorList>
    </citation>
    <scope>NUCLEOTIDE SEQUENCE [LARGE SCALE GENOMIC DNA]</scope>
    <source>
        <strain>NIH 2624 / FGSC A1156</strain>
    </source>
</reference>
<reference key="2">
    <citation type="journal article" date="2018" name="Nature">
        <title>Resistance-gene-directed discovery of a natural-product herbicide with a new mode of action.</title>
        <authorList>
            <person name="Yan Y."/>
            <person name="Liu Q."/>
            <person name="Zang X."/>
            <person name="Yuan S."/>
            <person name="Bat-Erdene U."/>
            <person name="Nguyen C."/>
            <person name="Gan J."/>
            <person name="Zhou J."/>
            <person name="Jacobsen S.E."/>
            <person name="Tang Y."/>
        </authorList>
    </citation>
    <scope>FUNCTION</scope>
    <scope>CATALYTIC ACTIVITY</scope>
    <scope>PATHWAY</scope>
    <scope>BIOTECHNOLOGY</scope>
</reference>
<reference key="3">
    <citation type="journal article" date="2024" name="J. Agric. Food Chem.">
        <title>Yeast synthesis and herbicidal activity evaluation of aspterric acid.</title>
        <authorList>
            <person name="Zhou Z."/>
            <person name="Zhang Y."/>
            <person name="Wu Q."/>
            <person name="Hou X."/>
            <person name="Zhang B."/>
        </authorList>
    </citation>
    <scope>FUNCTION</scope>
    <scope>PATHWAY</scope>
    <scope>BIOTECHNOLOGY</scope>
</reference>
<dbReference type="EC" id="1.-.-.-" evidence="3"/>
<dbReference type="EMBL" id="CH476599">
    <property type="protein sequence ID" value="EAU34865.1"/>
    <property type="molecule type" value="Genomic_DNA"/>
</dbReference>
<dbReference type="RefSeq" id="XP_001213596.1">
    <property type="nucleotide sequence ID" value="XM_001213596.1"/>
</dbReference>
<dbReference type="STRING" id="341663.Q0CPG6"/>
<dbReference type="EnsemblFungi" id="EAU34865">
    <property type="protein sequence ID" value="EAU34865"/>
    <property type="gene ID" value="ATEG_04418"/>
</dbReference>
<dbReference type="GeneID" id="4320375"/>
<dbReference type="VEuPathDB" id="FungiDB:ATEG_04418"/>
<dbReference type="eggNOG" id="KOG0157">
    <property type="taxonomic scope" value="Eukaryota"/>
</dbReference>
<dbReference type="HOGENOM" id="CLU_022195_9_0_1"/>
<dbReference type="OMA" id="DFEVKMI"/>
<dbReference type="OrthoDB" id="1351063at2759"/>
<dbReference type="UniPathway" id="UPA00213"/>
<dbReference type="Proteomes" id="UP000007963">
    <property type="component" value="Unassembled WGS sequence"/>
</dbReference>
<dbReference type="GO" id="GO:0016020">
    <property type="term" value="C:membrane"/>
    <property type="evidence" value="ECO:0007669"/>
    <property type="project" value="UniProtKB-SubCell"/>
</dbReference>
<dbReference type="GO" id="GO:0020037">
    <property type="term" value="F:heme binding"/>
    <property type="evidence" value="ECO:0007669"/>
    <property type="project" value="InterPro"/>
</dbReference>
<dbReference type="GO" id="GO:0005506">
    <property type="term" value="F:iron ion binding"/>
    <property type="evidence" value="ECO:0007669"/>
    <property type="project" value="InterPro"/>
</dbReference>
<dbReference type="GO" id="GO:0004497">
    <property type="term" value="F:monooxygenase activity"/>
    <property type="evidence" value="ECO:0007669"/>
    <property type="project" value="UniProtKB-KW"/>
</dbReference>
<dbReference type="GO" id="GO:0016705">
    <property type="term" value="F:oxidoreductase activity, acting on paired donors, with incorporation or reduction of molecular oxygen"/>
    <property type="evidence" value="ECO:0007669"/>
    <property type="project" value="InterPro"/>
</dbReference>
<dbReference type="GO" id="GO:0019748">
    <property type="term" value="P:secondary metabolic process"/>
    <property type="evidence" value="ECO:0007669"/>
    <property type="project" value="UniProtKB-ARBA"/>
</dbReference>
<dbReference type="CDD" id="cd11041">
    <property type="entry name" value="CYP503A1-like"/>
    <property type="match status" value="1"/>
</dbReference>
<dbReference type="Gene3D" id="1.10.630.10">
    <property type="entry name" value="Cytochrome P450"/>
    <property type="match status" value="1"/>
</dbReference>
<dbReference type="InterPro" id="IPR001128">
    <property type="entry name" value="Cyt_P450"/>
</dbReference>
<dbReference type="InterPro" id="IPR017972">
    <property type="entry name" value="Cyt_P450_CS"/>
</dbReference>
<dbReference type="InterPro" id="IPR002403">
    <property type="entry name" value="Cyt_P450_E_grp-IV"/>
</dbReference>
<dbReference type="InterPro" id="IPR036396">
    <property type="entry name" value="Cyt_P450_sf"/>
</dbReference>
<dbReference type="PANTHER" id="PTHR46206">
    <property type="entry name" value="CYTOCHROME P450"/>
    <property type="match status" value="1"/>
</dbReference>
<dbReference type="PANTHER" id="PTHR46206:SF1">
    <property type="entry name" value="P450, PUTATIVE (EUROFUNG)-RELATED"/>
    <property type="match status" value="1"/>
</dbReference>
<dbReference type="Pfam" id="PF00067">
    <property type="entry name" value="p450"/>
    <property type="match status" value="1"/>
</dbReference>
<dbReference type="PRINTS" id="PR00465">
    <property type="entry name" value="EP450IV"/>
</dbReference>
<dbReference type="SUPFAM" id="SSF48264">
    <property type="entry name" value="Cytochrome P450"/>
    <property type="match status" value="1"/>
</dbReference>
<dbReference type="PROSITE" id="PS00086">
    <property type="entry name" value="CYTOCHROME_P450"/>
    <property type="match status" value="1"/>
</dbReference>